<protein>
    <recommendedName>
        <fullName evidence="1">Large ribosomal subunit protein bL36</fullName>
    </recommendedName>
    <alternativeName>
        <fullName evidence="2">50S ribosomal protein L36</fullName>
    </alternativeName>
</protein>
<reference key="1">
    <citation type="journal article" date="2004" name="Proc. Natl. Acad. Sci. U.S.A.">
        <title>Complete genomes of two clinical Staphylococcus aureus strains: evidence for the rapid evolution of virulence and drug resistance.</title>
        <authorList>
            <person name="Holden M.T.G."/>
            <person name="Feil E.J."/>
            <person name="Lindsay J.A."/>
            <person name="Peacock S.J."/>
            <person name="Day N.P.J."/>
            <person name="Enright M.C."/>
            <person name="Foster T.J."/>
            <person name="Moore C.E."/>
            <person name="Hurst L."/>
            <person name="Atkin R."/>
            <person name="Barron A."/>
            <person name="Bason N."/>
            <person name="Bentley S.D."/>
            <person name="Chillingworth C."/>
            <person name="Chillingworth T."/>
            <person name="Churcher C."/>
            <person name="Clark L."/>
            <person name="Corton C."/>
            <person name="Cronin A."/>
            <person name="Doggett J."/>
            <person name="Dowd L."/>
            <person name="Feltwell T."/>
            <person name="Hance Z."/>
            <person name="Harris B."/>
            <person name="Hauser H."/>
            <person name="Holroyd S."/>
            <person name="Jagels K."/>
            <person name="James K.D."/>
            <person name="Lennard N."/>
            <person name="Line A."/>
            <person name="Mayes R."/>
            <person name="Moule S."/>
            <person name="Mungall K."/>
            <person name="Ormond D."/>
            <person name="Quail M.A."/>
            <person name="Rabbinowitsch E."/>
            <person name="Rutherford K.M."/>
            <person name="Sanders M."/>
            <person name="Sharp S."/>
            <person name="Simmonds M."/>
            <person name="Stevens K."/>
            <person name="Whitehead S."/>
            <person name="Barrell B.G."/>
            <person name="Spratt B.G."/>
            <person name="Parkhill J."/>
        </authorList>
    </citation>
    <scope>NUCLEOTIDE SEQUENCE [LARGE SCALE GENOMIC DNA]</scope>
    <source>
        <strain>MSSA476</strain>
    </source>
</reference>
<comment type="similarity">
    <text evidence="1">Belongs to the bacterial ribosomal protein bL36 family.</text>
</comment>
<gene>
    <name evidence="1" type="primary">rpmJ</name>
    <name type="ordered locus">SAS2118</name>
</gene>
<organism>
    <name type="scientific">Staphylococcus aureus (strain MSSA476)</name>
    <dbReference type="NCBI Taxonomy" id="282459"/>
    <lineage>
        <taxon>Bacteria</taxon>
        <taxon>Bacillati</taxon>
        <taxon>Bacillota</taxon>
        <taxon>Bacilli</taxon>
        <taxon>Bacillales</taxon>
        <taxon>Staphylococcaceae</taxon>
        <taxon>Staphylococcus</taxon>
    </lineage>
</organism>
<dbReference type="EMBL" id="BX571857">
    <property type="protein sequence ID" value="CAG43929.1"/>
    <property type="molecule type" value="Genomic_DNA"/>
</dbReference>
<dbReference type="RefSeq" id="WP_000868342.1">
    <property type="nucleotide sequence ID" value="NC_002953.3"/>
</dbReference>
<dbReference type="SMR" id="Q6G794"/>
<dbReference type="GeneID" id="98346539"/>
<dbReference type="KEGG" id="sas:SAS2118"/>
<dbReference type="HOGENOM" id="CLU_135723_6_2_9"/>
<dbReference type="GO" id="GO:0005737">
    <property type="term" value="C:cytoplasm"/>
    <property type="evidence" value="ECO:0007669"/>
    <property type="project" value="UniProtKB-ARBA"/>
</dbReference>
<dbReference type="GO" id="GO:1990904">
    <property type="term" value="C:ribonucleoprotein complex"/>
    <property type="evidence" value="ECO:0007669"/>
    <property type="project" value="UniProtKB-KW"/>
</dbReference>
<dbReference type="GO" id="GO:0005840">
    <property type="term" value="C:ribosome"/>
    <property type="evidence" value="ECO:0007669"/>
    <property type="project" value="UniProtKB-KW"/>
</dbReference>
<dbReference type="GO" id="GO:0003735">
    <property type="term" value="F:structural constituent of ribosome"/>
    <property type="evidence" value="ECO:0007669"/>
    <property type="project" value="InterPro"/>
</dbReference>
<dbReference type="GO" id="GO:0006412">
    <property type="term" value="P:translation"/>
    <property type="evidence" value="ECO:0007669"/>
    <property type="project" value="UniProtKB-UniRule"/>
</dbReference>
<dbReference type="HAMAP" id="MF_00251">
    <property type="entry name" value="Ribosomal_bL36"/>
    <property type="match status" value="1"/>
</dbReference>
<dbReference type="InterPro" id="IPR000473">
    <property type="entry name" value="Ribosomal_bL36"/>
</dbReference>
<dbReference type="InterPro" id="IPR035977">
    <property type="entry name" value="Ribosomal_bL36_sp"/>
</dbReference>
<dbReference type="NCBIfam" id="TIGR01022">
    <property type="entry name" value="rpmJ_bact"/>
    <property type="match status" value="1"/>
</dbReference>
<dbReference type="PANTHER" id="PTHR42888">
    <property type="entry name" value="50S RIBOSOMAL PROTEIN L36, CHLOROPLASTIC"/>
    <property type="match status" value="1"/>
</dbReference>
<dbReference type="PANTHER" id="PTHR42888:SF1">
    <property type="entry name" value="LARGE RIBOSOMAL SUBUNIT PROTEIN BL36C"/>
    <property type="match status" value="1"/>
</dbReference>
<dbReference type="Pfam" id="PF00444">
    <property type="entry name" value="Ribosomal_L36"/>
    <property type="match status" value="1"/>
</dbReference>
<dbReference type="SUPFAM" id="SSF57840">
    <property type="entry name" value="Ribosomal protein L36"/>
    <property type="match status" value="1"/>
</dbReference>
<dbReference type="PROSITE" id="PS00828">
    <property type="entry name" value="RIBOSOMAL_L36"/>
    <property type="match status" value="1"/>
</dbReference>
<evidence type="ECO:0000255" key="1">
    <source>
        <dbReference type="HAMAP-Rule" id="MF_00251"/>
    </source>
</evidence>
<evidence type="ECO:0000305" key="2"/>
<proteinExistence type="inferred from homology"/>
<name>RL36_STAAS</name>
<feature type="chain" id="PRO_0000126261" description="Large ribosomal subunit protein bL36">
    <location>
        <begin position="1"/>
        <end position="37"/>
    </location>
</feature>
<keyword id="KW-0687">Ribonucleoprotein</keyword>
<keyword id="KW-0689">Ribosomal protein</keyword>
<accession>Q6G794</accession>
<sequence>MKVRPSVKPICEKCKVIKRKGKVMVICENPKHKQRQG</sequence>